<comment type="function">
    <text evidence="2">Membrane-anchoring subunit of succinate dehydrogenase (SDH).</text>
</comment>
<comment type="cofactor">
    <cofactor evidence="1">
        <name>heme</name>
        <dbReference type="ChEBI" id="CHEBI:30413"/>
    </cofactor>
    <text evidence="1">The heme is bound between the two transmembrane subunits.</text>
</comment>
<comment type="pathway">
    <text>Carbohydrate metabolism; tricarboxylic acid cycle.</text>
</comment>
<comment type="subunit">
    <text evidence="2">Part of an enzyme complex containing four subunits: a flavoprotein, an iron-sulfur protein, plus two membrane-anchoring proteins, SdhC and SdhD.</text>
</comment>
<comment type="subcellular location">
    <subcellularLocation>
        <location>Cell inner membrane</location>
        <topology>Multi-pass membrane protein</topology>
    </subcellularLocation>
</comment>
<comment type="sequence caution" evidence="3">
    <conflict type="erroneous initiation">
        <sequence resource="EMBL-CDS" id="AAA74132"/>
    </conflict>
</comment>
<organism>
    <name type="scientific">Coxiella burnetii (strain RSA 493 / Nine Mile phase I)</name>
    <dbReference type="NCBI Taxonomy" id="227377"/>
    <lineage>
        <taxon>Bacteria</taxon>
        <taxon>Pseudomonadati</taxon>
        <taxon>Pseudomonadota</taxon>
        <taxon>Gammaproteobacteria</taxon>
        <taxon>Legionellales</taxon>
        <taxon>Coxiellaceae</taxon>
        <taxon>Coxiella</taxon>
    </lineage>
</organism>
<sequence>MDMVDRTSRRGYRDWFVQRITALLSGIYAVFVIVFLLVHHPISYPQWHALFSHLIMKIFTLIVIFSILWHAWIGMWTIFTDYVKNKPIRLALETLVCLLLVGYFVWAIEFLWIAR</sequence>
<evidence type="ECO:0000250" key="1"/>
<evidence type="ECO:0000269" key="2">
    <source>
    </source>
</evidence>
<evidence type="ECO:0000305" key="3"/>
<accession>P51057</accession>
<proteinExistence type="evidence at protein level"/>
<gene>
    <name type="primary">sdhD</name>
    <name type="ordered locus">CBU_1402</name>
</gene>
<name>DHSD_COXBU</name>
<dbReference type="EMBL" id="L33409">
    <property type="protein sequence ID" value="AAA74132.1"/>
    <property type="status" value="ALT_INIT"/>
    <property type="molecule type" value="Genomic_DNA"/>
</dbReference>
<dbReference type="EMBL" id="AE016828">
    <property type="protein sequence ID" value="AAO90901.2"/>
    <property type="molecule type" value="Genomic_DNA"/>
</dbReference>
<dbReference type="PIR" id="I40848">
    <property type="entry name" value="I40848"/>
</dbReference>
<dbReference type="RefSeq" id="NP_820387.2">
    <property type="nucleotide sequence ID" value="NC_002971.4"/>
</dbReference>
<dbReference type="RefSeq" id="WP_010958203.1">
    <property type="nucleotide sequence ID" value="NC_002971.4"/>
</dbReference>
<dbReference type="SMR" id="P51057"/>
<dbReference type="STRING" id="227377.CBU_1402"/>
<dbReference type="EnsemblBacteria" id="AAO90901">
    <property type="protein sequence ID" value="AAO90901"/>
    <property type="gene ID" value="CBU_1402"/>
</dbReference>
<dbReference type="GeneID" id="1209308"/>
<dbReference type="KEGG" id="cbu:CBU_1402"/>
<dbReference type="PATRIC" id="fig|227377.7.peg.1404"/>
<dbReference type="eggNOG" id="COG2142">
    <property type="taxonomic scope" value="Bacteria"/>
</dbReference>
<dbReference type="HOGENOM" id="CLU_151315_2_0_6"/>
<dbReference type="OrthoDB" id="5612767at2"/>
<dbReference type="UniPathway" id="UPA00223"/>
<dbReference type="Proteomes" id="UP000002671">
    <property type="component" value="Chromosome"/>
</dbReference>
<dbReference type="GO" id="GO:0005886">
    <property type="term" value="C:plasma membrane"/>
    <property type="evidence" value="ECO:0000318"/>
    <property type="project" value="GO_Central"/>
</dbReference>
<dbReference type="GO" id="GO:0009055">
    <property type="term" value="F:electron transfer activity"/>
    <property type="evidence" value="ECO:0000318"/>
    <property type="project" value="GO_Central"/>
</dbReference>
<dbReference type="GO" id="GO:0020037">
    <property type="term" value="F:heme binding"/>
    <property type="evidence" value="ECO:0000318"/>
    <property type="project" value="GO_Central"/>
</dbReference>
<dbReference type="GO" id="GO:0046872">
    <property type="term" value="F:metal ion binding"/>
    <property type="evidence" value="ECO:0007669"/>
    <property type="project" value="UniProtKB-KW"/>
</dbReference>
<dbReference type="GO" id="GO:0009060">
    <property type="term" value="P:aerobic respiration"/>
    <property type="evidence" value="ECO:0000318"/>
    <property type="project" value="GO_Central"/>
</dbReference>
<dbReference type="GO" id="GO:0017004">
    <property type="term" value="P:cytochrome complex assembly"/>
    <property type="evidence" value="ECO:0000318"/>
    <property type="project" value="GO_Central"/>
</dbReference>
<dbReference type="GO" id="GO:0006099">
    <property type="term" value="P:tricarboxylic acid cycle"/>
    <property type="evidence" value="ECO:0007669"/>
    <property type="project" value="UniProtKB-UniPathway"/>
</dbReference>
<dbReference type="CDD" id="cd03494">
    <property type="entry name" value="SQR_TypeC_SdhD"/>
    <property type="match status" value="1"/>
</dbReference>
<dbReference type="Gene3D" id="1.20.1300.10">
    <property type="entry name" value="Fumarate reductase/succinate dehydrogenase, transmembrane subunit"/>
    <property type="match status" value="1"/>
</dbReference>
<dbReference type="InterPro" id="IPR034804">
    <property type="entry name" value="SQR/QFR_C/D"/>
</dbReference>
<dbReference type="InterPro" id="IPR014312">
    <property type="entry name" value="Succ_DH_anchor"/>
</dbReference>
<dbReference type="InterPro" id="IPR000701">
    <property type="entry name" value="SuccDH_FuR_B_TM-su"/>
</dbReference>
<dbReference type="NCBIfam" id="TIGR02968">
    <property type="entry name" value="succ_dehyd_anc"/>
    <property type="match status" value="1"/>
</dbReference>
<dbReference type="PANTHER" id="PTHR38689">
    <property type="entry name" value="SUCCINATE DEHYDROGENASE HYDROPHOBIC MEMBRANE ANCHOR SUBUNIT"/>
    <property type="match status" value="1"/>
</dbReference>
<dbReference type="PANTHER" id="PTHR38689:SF1">
    <property type="entry name" value="SUCCINATE DEHYDROGENASE HYDROPHOBIC MEMBRANE ANCHOR SUBUNIT"/>
    <property type="match status" value="1"/>
</dbReference>
<dbReference type="Pfam" id="PF01127">
    <property type="entry name" value="Sdh_cyt"/>
    <property type="match status" value="1"/>
</dbReference>
<dbReference type="PIRSF" id="PIRSF000169">
    <property type="entry name" value="SDH_D"/>
    <property type="match status" value="1"/>
</dbReference>
<dbReference type="SUPFAM" id="SSF81343">
    <property type="entry name" value="Fumarate reductase respiratory complex transmembrane subunits"/>
    <property type="match status" value="1"/>
</dbReference>
<feature type="chain" id="PRO_0000158671" description="Succinate dehydrogenase hydrophobic membrane anchor subunit">
    <location>
        <begin position="1"/>
        <end position="115"/>
    </location>
</feature>
<feature type="topological domain" description="Cytoplasmic" evidence="1">
    <location>
        <begin position="1"/>
        <end position="14"/>
    </location>
</feature>
<feature type="transmembrane region" description="Helical" evidence="1">
    <location>
        <begin position="15"/>
        <end position="35"/>
    </location>
</feature>
<feature type="topological domain" description="Periplasmic" evidence="1">
    <location>
        <begin position="36"/>
        <end position="57"/>
    </location>
</feature>
<feature type="transmembrane region" description="Helical" evidence="1">
    <location>
        <begin position="58"/>
        <end position="79"/>
    </location>
</feature>
<feature type="topological domain" description="Cytoplasmic" evidence="1">
    <location>
        <begin position="80"/>
        <end position="89"/>
    </location>
</feature>
<feature type="transmembrane region" description="Helical" evidence="1">
    <location>
        <begin position="90"/>
        <end position="113"/>
    </location>
</feature>
<feature type="binding site" description="axial binding residue" evidence="1">
    <location>
        <position position="70"/>
    </location>
    <ligand>
        <name>heme</name>
        <dbReference type="ChEBI" id="CHEBI:30413"/>
        <note>ligand shared with second transmembrane subunit</note>
    </ligand>
    <ligandPart>
        <name>Fe</name>
        <dbReference type="ChEBI" id="CHEBI:18248"/>
    </ligandPart>
</feature>
<feature type="binding site" evidence="1">
    <location>
        <position position="82"/>
    </location>
    <ligand>
        <name>a ubiquinone</name>
        <dbReference type="ChEBI" id="CHEBI:16389"/>
    </ligand>
</feature>
<keyword id="KW-0997">Cell inner membrane</keyword>
<keyword id="KW-1003">Cell membrane</keyword>
<keyword id="KW-0249">Electron transport</keyword>
<keyword id="KW-0349">Heme</keyword>
<keyword id="KW-0408">Iron</keyword>
<keyword id="KW-0472">Membrane</keyword>
<keyword id="KW-0479">Metal-binding</keyword>
<keyword id="KW-1185">Reference proteome</keyword>
<keyword id="KW-0812">Transmembrane</keyword>
<keyword id="KW-1133">Transmembrane helix</keyword>
<keyword id="KW-0813">Transport</keyword>
<keyword id="KW-0816">Tricarboxylic acid cycle</keyword>
<protein>
    <recommendedName>
        <fullName>Succinate dehydrogenase hydrophobic membrane anchor subunit</fullName>
    </recommendedName>
</protein>
<reference key="1">
    <citation type="journal article" date="1995" name="Gene">
        <title>Characterization of the succinate dehydrogenase-encoding gene cluster (sdh) from the rickettsia Coxiella burnetii.</title>
        <authorList>
            <person name="Heinzen R.A."/>
            <person name="Mo Y.-Y."/>
            <person name="Robertson S.J."/>
            <person name="Mallavia L.P."/>
        </authorList>
    </citation>
    <scope>NUCLEOTIDE SEQUENCE [GENOMIC DNA]</scope>
    <scope>FUNCTION</scope>
    <scope>SUBUNIT</scope>
    <source>
        <strain>Nine Mile</strain>
    </source>
</reference>
<reference key="2">
    <citation type="journal article" date="2003" name="Proc. Natl. Acad. Sci. U.S.A.">
        <title>Complete genome sequence of the Q-fever pathogen, Coxiella burnetii.</title>
        <authorList>
            <person name="Seshadri R."/>
            <person name="Paulsen I.T."/>
            <person name="Eisen J.A."/>
            <person name="Read T.D."/>
            <person name="Nelson K.E."/>
            <person name="Nelson W.C."/>
            <person name="Ward N.L."/>
            <person name="Tettelin H."/>
            <person name="Davidsen T.M."/>
            <person name="Beanan M.J."/>
            <person name="DeBoy R.T."/>
            <person name="Daugherty S.C."/>
            <person name="Brinkac L.M."/>
            <person name="Madupu R."/>
            <person name="Dodson R.J."/>
            <person name="Khouri H.M."/>
            <person name="Lee K.H."/>
            <person name="Carty H.A."/>
            <person name="Scanlan D."/>
            <person name="Heinzen R.A."/>
            <person name="Thompson H.A."/>
            <person name="Samuel J.E."/>
            <person name="Fraser C.M."/>
            <person name="Heidelberg J.F."/>
        </authorList>
    </citation>
    <scope>NUCLEOTIDE SEQUENCE [LARGE SCALE GENOMIC DNA]</scope>
    <source>
        <strain>RSA 493 / Nine Mile phase I</strain>
    </source>
</reference>